<comment type="function">
    <text evidence="1 3 5">Part of the gene cluster that mediates the biosynthesis of squalestatin S1 (SQS1, also known as zaragozic acid A), a heavily oxidized fungal polyketide that offers potent cholesterol lowering activity by targeting squalene synthase (SS) (PubMed:28605916). SQS1 is composed of a 2,8-dioxobicyclic[3.2.1]octane-3,4,5-tricarboxyclic acid core that is connected to two lipophilic polyketide arms (PubMed:28605916). These initial steps feature the priming of an unusual benzoic acid starter unit onto the highly reducing polyketide synthase clz14, followed by oxaloacetate extension and product release to generate a tricarboxylic acid containing product (PubMed:28605916). The phenylalanine ammonia lyase (PAL) clz10 and the acyl-CoA ligase clz12 are involved in transforming phenylalanine into benzoyl-CoA (PubMed:28605916). The citrate synthase-like protein clz17 is involved in connecting the C-alpha-carbons of the hexaketide chain and oxaloacetate to afford the tricarboxylic acid unit (PubMed:28605916). The potential hydrolytic enzymes, clz11 and clz13, are in close proximity to pks2 and may participate in product release (PubMed:28605916). On the other side, the tetraketide arm is synthesized by a the squalestatin tetraketide synthase clz2 and enzymatically esterified to the core in the last biosynthetic step, by the acetyltransferase clz6 (By similarity). The biosynthesis of the tetraketide must involve 3 rounds of chain extension (By similarity). After the first and second rounds methyl-transfer occurs, and in all rounds of extension the ketoreductase and dehydratase are active (By similarity). The enoyl reductase and C-MeT of clz2 are not active in the final round of extension (By similarity). The acetyltransferase clz6 appears to have a broad substrate selectivity for its acyl CoA substrate, allowing the in vitro synthesis of novel squalestatins (By similarity). The biosynthesis of SQS1 requires several oxidative steps likely performed by oxidoreductases clz3, clz15 and clz16 (Probable). Finally, in support of the identification of the cluster as being responsible for SQS1 production, the cluster contains a gene encoding a putative squalene synthase (SS) clz20, suggesting a likely mechanism for self-resistance (Probable).</text>
</comment>
<comment type="pathway">
    <text evidence="5">Secondary metabolite biosynthesis.</text>
</comment>
<reference key="1">
    <citation type="journal article" date="2017" name="Org. Lett.">
        <title>Identification and heterologous production of a benzoyl-primed tricarboxylic acid polyketide intermediate from the zaragozic acid A biosynthetic pathway.</title>
        <authorList>
            <person name="Liu N."/>
            <person name="Hung Y.S."/>
            <person name="Gao S.S."/>
            <person name="Hang L."/>
            <person name="Zou Y."/>
            <person name="Chooi Y.H."/>
            <person name="Tang Y."/>
        </authorList>
    </citation>
    <scope>NUCLEOTIDE SEQUENCE [GENOMIC DNA]</scope>
    <scope>FUNCTION</scope>
    <scope>PATHWAY</scope>
    <source>
        <strain>ATCC 74067</strain>
    </source>
</reference>
<feature type="chain" id="PRO_0000452624" description="Zaragozic acid A biosynthesis cluster protein 8">
    <location>
        <begin position="1"/>
        <end position="261"/>
    </location>
</feature>
<feature type="region of interest" description="Disordered" evidence="2">
    <location>
        <begin position="242"/>
        <end position="261"/>
    </location>
</feature>
<feature type="compositionally biased region" description="Polar residues" evidence="2">
    <location>
        <begin position="242"/>
        <end position="254"/>
    </location>
</feature>
<organism>
    <name type="scientific">Cochliobolus lunatus</name>
    <name type="common">Filamentous fungus</name>
    <name type="synonym">Curvularia lunata</name>
    <dbReference type="NCBI Taxonomy" id="5503"/>
    <lineage>
        <taxon>Eukaryota</taxon>
        <taxon>Fungi</taxon>
        <taxon>Dikarya</taxon>
        <taxon>Ascomycota</taxon>
        <taxon>Pezizomycotina</taxon>
        <taxon>Dothideomycetes</taxon>
        <taxon>Pleosporomycetidae</taxon>
        <taxon>Pleosporales</taxon>
        <taxon>Pleosporineae</taxon>
        <taxon>Pleosporaceae</taxon>
        <taxon>Curvularia</taxon>
    </lineage>
</organism>
<evidence type="ECO:0000250" key="1">
    <source>
        <dbReference type="UniProtKB" id="A0A3G1DJH7"/>
    </source>
</evidence>
<evidence type="ECO:0000256" key="2">
    <source>
        <dbReference type="SAM" id="MobiDB-lite"/>
    </source>
</evidence>
<evidence type="ECO:0000269" key="3">
    <source>
    </source>
</evidence>
<evidence type="ECO:0000303" key="4">
    <source>
    </source>
</evidence>
<evidence type="ECO:0000305" key="5">
    <source>
    </source>
</evidence>
<sequence length="261" mass="30131">MYLEKEQLPYFNEWAECFCQYLPDFSIRVTSRAEGSHHKIKIRLHFKGQSHFFHVVQDLNQMVNEQRHKHKNKSAANSARVPANAVYIVKLSQIDQHWFLQPPRAKGLLFEQDDDLFWPLDPRVIKLKGRPRGATTKSVLRTPKRRRVIRKKVTDITEEEEVVEAPQSSGSLNAATMRLFQQVLHQEMTPMQAQVQALQDRIDSSVVNISDNKKKVEEEGLRSFDDEFFSPKHVQAVQLSYGTRSHTPAATQRRGQGRGCG</sequence>
<protein>
    <recommendedName>
        <fullName evidence="4">Zaragozic acid A biosynthesis cluster protein 8</fullName>
    </recommendedName>
    <alternativeName>
        <fullName evidence="4">Squalestatin S1 biosynthesis cluster protein clz8</fullName>
    </alternativeName>
</protein>
<accession>A0A345BJN7</accession>
<name>CLZ8_COCLU</name>
<gene>
    <name evidence="4" type="primary">clz8</name>
</gene>
<dbReference type="EMBL" id="MF806533">
    <property type="protein sequence ID" value="AXF50650.1"/>
    <property type="molecule type" value="Genomic_DNA"/>
</dbReference>
<proteinExistence type="inferred from homology"/>